<dbReference type="EC" id="1.5.1.36"/>
<dbReference type="EMBL" id="CP000431">
    <property type="protein sequence ID" value="ABG96328.1"/>
    <property type="molecule type" value="Genomic_DNA"/>
</dbReference>
<dbReference type="RefSeq" id="WP_005244804.1">
    <property type="nucleotide sequence ID" value="NC_008268.1"/>
</dbReference>
<dbReference type="SMR" id="Q0S808"/>
<dbReference type="GeneID" id="69888804"/>
<dbReference type="KEGG" id="rha:RHA1_ro04542"/>
<dbReference type="eggNOG" id="COG1853">
    <property type="taxonomic scope" value="Bacteria"/>
</dbReference>
<dbReference type="HOGENOM" id="CLU_059021_1_0_11"/>
<dbReference type="OrthoDB" id="9792858at2"/>
<dbReference type="BioCyc" id="MetaCyc:MONOMER-16962"/>
<dbReference type="UniPathway" id="UPA00062"/>
<dbReference type="Proteomes" id="UP000008710">
    <property type="component" value="Chromosome"/>
</dbReference>
<dbReference type="GO" id="GO:0036382">
    <property type="term" value="F:flavin reductase (NADH) activity"/>
    <property type="evidence" value="ECO:0007669"/>
    <property type="project" value="UniProtKB-EC"/>
</dbReference>
<dbReference type="GO" id="GO:0010181">
    <property type="term" value="F:FMN binding"/>
    <property type="evidence" value="ECO:0007669"/>
    <property type="project" value="InterPro"/>
</dbReference>
<dbReference type="GO" id="GO:0042602">
    <property type="term" value="F:riboflavin reductase (NADPH) activity"/>
    <property type="evidence" value="ECO:0007669"/>
    <property type="project" value="TreeGrafter"/>
</dbReference>
<dbReference type="GO" id="GO:0016042">
    <property type="term" value="P:lipid catabolic process"/>
    <property type="evidence" value="ECO:0007669"/>
    <property type="project" value="UniProtKB-KW"/>
</dbReference>
<dbReference type="GO" id="GO:0006694">
    <property type="term" value="P:steroid biosynthetic process"/>
    <property type="evidence" value="ECO:0007669"/>
    <property type="project" value="UniProtKB-UniPathway"/>
</dbReference>
<dbReference type="Gene3D" id="2.30.110.10">
    <property type="entry name" value="Electron Transport, Fmn-binding Protein, Chain A"/>
    <property type="match status" value="1"/>
</dbReference>
<dbReference type="InterPro" id="IPR002563">
    <property type="entry name" value="Flavin_Rdtase-like_dom"/>
</dbReference>
<dbReference type="InterPro" id="IPR054682">
    <property type="entry name" value="HsaB"/>
</dbReference>
<dbReference type="InterPro" id="IPR050268">
    <property type="entry name" value="NADH-dep_flavin_reductase"/>
</dbReference>
<dbReference type="InterPro" id="IPR012349">
    <property type="entry name" value="Split_barrel_FMN-bd"/>
</dbReference>
<dbReference type="NCBIfam" id="NF045630">
    <property type="entry name" value="monooxsub_HsaB"/>
    <property type="match status" value="1"/>
</dbReference>
<dbReference type="PANTHER" id="PTHR30466">
    <property type="entry name" value="FLAVIN REDUCTASE"/>
    <property type="match status" value="1"/>
</dbReference>
<dbReference type="PANTHER" id="PTHR30466:SF11">
    <property type="entry name" value="FLAVIN-DEPENDENT MONOOXYGENASE, REDUCTASE SUBUNIT HSAB"/>
    <property type="match status" value="1"/>
</dbReference>
<dbReference type="Pfam" id="PF01613">
    <property type="entry name" value="Flavin_Reduct"/>
    <property type="match status" value="1"/>
</dbReference>
<dbReference type="SMART" id="SM00903">
    <property type="entry name" value="Flavin_Reduct"/>
    <property type="match status" value="1"/>
</dbReference>
<dbReference type="SUPFAM" id="SSF50475">
    <property type="entry name" value="FMN-binding split barrel"/>
    <property type="match status" value="1"/>
</dbReference>
<comment type="function">
    <text evidence="1 2">Catalyzes the reduction of free flavins (FMN or FAD) by NADH. Subsequently, the reduced flavins diffuse to the HsaA oxygenase subunit (By similarity).</text>
</comment>
<comment type="catalytic activity">
    <reaction>
        <text>a reduced flavin + NAD(+) = an oxidized flavin + NADH + 2 H(+)</text>
        <dbReference type="Rhea" id="RHEA:31303"/>
        <dbReference type="ChEBI" id="CHEBI:15378"/>
        <dbReference type="ChEBI" id="CHEBI:57540"/>
        <dbReference type="ChEBI" id="CHEBI:57945"/>
        <dbReference type="ChEBI" id="CHEBI:60531"/>
        <dbReference type="ChEBI" id="CHEBI:62787"/>
        <dbReference type="EC" id="1.5.1.36"/>
    </reaction>
</comment>
<comment type="pathway">
    <text>Lipid metabolism; steroid biosynthesis.</text>
</comment>
<comment type="subunit">
    <text evidence="1">HsaAB monooxygenase consists of an oxygenase component HsaA and a reductase component HsaB.</text>
</comment>
<comment type="similarity">
    <text evidence="3">Belongs to the non-flavoprotein flavin reductase family.</text>
</comment>
<feature type="chain" id="PRO_0000404506" description="Flavin-dependent monooxygenase, reductase subunit HsaB">
    <location>
        <begin position="1"/>
        <end position="195"/>
    </location>
</feature>
<feature type="binding site" evidence="1">
    <location>
        <begin position="42"/>
        <end position="46"/>
    </location>
    <ligand>
        <name>FAD</name>
        <dbReference type="ChEBI" id="CHEBI:57692"/>
    </ligand>
</feature>
<feature type="binding site" evidence="1">
    <location>
        <begin position="48"/>
        <end position="49"/>
    </location>
    <ligand>
        <name>FAD</name>
        <dbReference type="ChEBI" id="CHEBI:57692"/>
    </ligand>
</feature>
<feature type="binding site" evidence="1">
    <location>
        <begin position="63"/>
        <end position="65"/>
    </location>
    <ligand>
        <name>FAD</name>
        <dbReference type="ChEBI" id="CHEBI:57692"/>
    </ligand>
</feature>
<feature type="binding site" evidence="1">
    <location>
        <begin position="69"/>
        <end position="70"/>
    </location>
    <ligand>
        <name>FAD</name>
        <dbReference type="ChEBI" id="CHEBI:57692"/>
    </ligand>
</feature>
<feature type="binding site" evidence="1">
    <location>
        <begin position="95"/>
        <end position="96"/>
    </location>
    <ligand>
        <name>FAD</name>
        <dbReference type="ChEBI" id="CHEBI:57692"/>
    </ligand>
</feature>
<feature type="binding site" evidence="1">
    <location>
        <begin position="160"/>
        <end position="163"/>
    </location>
    <ligand>
        <name>NAD(+)</name>
        <dbReference type="ChEBI" id="CHEBI:57540"/>
    </ligand>
</feature>
<evidence type="ECO:0000250" key="1"/>
<evidence type="ECO:0000269" key="2">
    <source>
    </source>
</evidence>
<evidence type="ECO:0000305" key="3"/>
<protein>
    <recommendedName>
        <fullName>Flavin-dependent monooxygenase, reductase subunit HsaB</fullName>
        <ecNumber>1.5.1.36</ecNumber>
    </recommendedName>
    <alternativeName>
        <fullName>3-hydroxy-9,10-secoandrosta-1,3,5(10)-triene-9,17-dione 4-hydroxylase, reductase subunit</fullName>
    </alternativeName>
    <alternativeName>
        <fullName>Flavin:NADH reductase</fullName>
    </alternativeName>
</protein>
<gene>
    <name type="primary">hsaB</name>
    <name type="ordered locus">RHA1_ro04542</name>
</gene>
<sequence length="195" mass="21233">MSEVTGDGAVAAEAIDPRRFRTVLGQFCTGVTIITTIDDGVPVGFACQSFAALSLEPPLVLFCPTKTSRSWAAIERSGIFCVNVLAEEQQSTCARFGSRDPDKFAGIDWTESPLGSPILTGSLAHIDCSLESVHDGGDHWVAFGRVSSLSEIREERPLLFYRGQYTGIEPDKTVPAPWRDDLEAFLTTSSEDTWL</sequence>
<accession>Q0S808</accession>
<name>HSAB_RHOJR</name>
<keyword id="KW-0058">Aromatic hydrocarbons catabolism</keyword>
<keyword id="KW-0274">FAD</keyword>
<keyword id="KW-0285">Flavoprotein</keyword>
<keyword id="KW-0288">FMN</keyword>
<keyword id="KW-0442">Lipid degradation</keyword>
<keyword id="KW-0443">Lipid metabolism</keyword>
<keyword id="KW-0520">NAD</keyword>
<keyword id="KW-0560">Oxidoreductase</keyword>
<keyword id="KW-0753">Steroid metabolism</keyword>
<reference key="1">
    <citation type="journal article" date="2006" name="Proc. Natl. Acad. Sci. U.S.A.">
        <title>The complete genome of Rhodococcus sp. RHA1 provides insights into a catabolic powerhouse.</title>
        <authorList>
            <person name="McLeod M.P."/>
            <person name="Warren R.L."/>
            <person name="Hsiao W.W.L."/>
            <person name="Araki N."/>
            <person name="Myhre M."/>
            <person name="Fernandes C."/>
            <person name="Miyazawa D."/>
            <person name="Wong W."/>
            <person name="Lillquist A.L."/>
            <person name="Wang D."/>
            <person name="Dosanjh M."/>
            <person name="Hara H."/>
            <person name="Petrescu A."/>
            <person name="Morin R.D."/>
            <person name="Yang G."/>
            <person name="Stott J.M."/>
            <person name="Schein J.E."/>
            <person name="Shin H."/>
            <person name="Smailus D."/>
            <person name="Siddiqui A.S."/>
            <person name="Marra M.A."/>
            <person name="Jones S.J.M."/>
            <person name="Holt R."/>
            <person name="Brinkman F.S.L."/>
            <person name="Miyauchi K."/>
            <person name="Fukuda M."/>
            <person name="Davies J.E."/>
            <person name="Mohn W.W."/>
            <person name="Eltis L.D."/>
        </authorList>
    </citation>
    <scope>NUCLEOTIDE SEQUENCE [LARGE SCALE GENOMIC DNA]</scope>
    <source>
        <strain>RHA1</strain>
    </source>
</reference>
<reference key="2">
    <citation type="journal article" date="2007" name="Proc. Natl. Acad. Sci. U.S.A.">
        <title>A gene cluster encoding cholesterol catabolism in a soil actinomycete provides insight into Mycobacterium tuberculosis survival in macrophages.</title>
        <authorList>
            <person name="Van der Geize R."/>
            <person name="Yam K."/>
            <person name="Heuser T."/>
            <person name="Wilbrink M.H."/>
            <person name="Hara H."/>
            <person name="Anderton M.C."/>
            <person name="Sim E."/>
            <person name="Dijkhuizen L."/>
            <person name="Davies J.E."/>
            <person name="Mohn W.W."/>
            <person name="Eltis L.D."/>
        </authorList>
    </citation>
    <scope>FUNCTION IN CHOLESTEROL DEGRADATION</scope>
    <source>
        <strain>RHA1</strain>
    </source>
</reference>
<proteinExistence type="evidence at protein level"/>
<organism>
    <name type="scientific">Rhodococcus jostii (strain RHA1)</name>
    <dbReference type="NCBI Taxonomy" id="101510"/>
    <lineage>
        <taxon>Bacteria</taxon>
        <taxon>Bacillati</taxon>
        <taxon>Actinomycetota</taxon>
        <taxon>Actinomycetes</taxon>
        <taxon>Mycobacteriales</taxon>
        <taxon>Nocardiaceae</taxon>
        <taxon>Rhodococcus</taxon>
    </lineage>
</organism>